<comment type="function">
    <text>Central component of the condensin complex, a complex required for conversion of interphase chromatin into mitotic-like condense chromosomes. The condensin complex probably introduces positive supercoils into relaxed DNA in the presence of type I topoisomerases and converts nicked DNA into positive knotted forms in the presence of type II topoisomerases.</text>
</comment>
<comment type="subunit">
    <text evidence="4 5">Forms a heterodimer with cut14/smc2. Component of the condensin complex, which contains the smc2 and smc4 heterodimer, and three non smc subunits that probably regulate the complex: cnd1, cnd2 and cnd3. Interacts with C1739.07.</text>
</comment>
<comment type="interaction">
    <interactant intactId="EBI-1149474">
        <id>P41004</id>
    </interactant>
    <interactant intactId="EBI-1149594">
        <id>Q9Y7R3</id>
        <label>cnd2</label>
    </interactant>
    <organismsDiffer>false</organismsDiffer>
    <experiments>3</experiments>
</comment>
<comment type="interaction">
    <interactant intactId="EBI-1149474">
        <id>P41004</id>
    </interactant>
    <interactant intactId="EBI-1149523">
        <id>P41003</id>
        <label>cut14</label>
    </interactant>
    <organismsDiffer>false</organismsDiffer>
    <experiments>5</experiments>
</comment>
<comment type="interaction">
    <interactant intactId="EBI-1149474">
        <id>P41004</id>
    </interactant>
    <interactant intactId="EBI-1149494">
        <id>O74469</id>
        <label>SPCC1739.07</label>
    </interactant>
    <organismsDiffer>false</organismsDiffer>
    <experiments>3</experiments>
</comment>
<comment type="subcellular location">
    <subcellularLocation>
        <location>Nucleus</location>
    </subcellularLocation>
    <subcellularLocation>
        <location>Cytoplasm</location>
    </subcellularLocation>
    <subcellularLocation>
        <location>Chromosome</location>
    </subcellularLocation>
    <text>In interphase cells, the majority of the condensin complex is found in the cytoplasm, while a minority of the complex is associated with chromatin. A subpopulation of the complex however remains associated with chromosome foci in interphase cells. During mitosis, most of the condensin complex is associated with the chromatin. At the onset of prophase, condensin associates with chromosome arms and to chromosome condensation. Dissociation from chromosomes is observed in late telophase.</text>
</comment>
<comment type="domain">
    <text evidence="1">The flexible SMC hinge domain, which separates the large intramolecular coiled coil regions, allows the heterodimerization with cut14, forming a V-shaped heterodimer.</text>
</comment>
<comment type="PTM">
    <text evidence="4">Phosphorylated by CDC2 on Thr-19 at metaphase.</text>
</comment>
<comment type="similarity">
    <text evidence="6">Belongs to the SMC family. SMC4 subfamily.</text>
</comment>
<gene>
    <name type="primary">cut3</name>
    <name type="synonym">smc4</name>
    <name type="ORF">SPBC146.03c</name>
</gene>
<organism>
    <name type="scientific">Schizosaccharomyces pombe (strain 972 / ATCC 24843)</name>
    <name type="common">Fission yeast</name>
    <dbReference type="NCBI Taxonomy" id="284812"/>
    <lineage>
        <taxon>Eukaryota</taxon>
        <taxon>Fungi</taxon>
        <taxon>Dikarya</taxon>
        <taxon>Ascomycota</taxon>
        <taxon>Taphrinomycotina</taxon>
        <taxon>Schizosaccharomycetes</taxon>
        <taxon>Schizosaccharomycetales</taxon>
        <taxon>Schizosaccharomycetaceae</taxon>
        <taxon>Schizosaccharomyces</taxon>
    </lineage>
</organism>
<reference key="1">
    <citation type="journal article" date="1994" name="EMBO J.">
        <title>Fission yeast cut3 and cut14, members of a ubiquitous protein family, are required for chromosome condensation and segregation in mitosis.</title>
        <authorList>
            <person name="Saka Y."/>
            <person name="Sutani T."/>
            <person name="Yamashita Y."/>
            <person name="Saitoh S."/>
            <person name="Takeuchi M."/>
            <person name="Nakaseko Y."/>
            <person name="Yanagida M."/>
        </authorList>
    </citation>
    <scope>NUCLEOTIDE SEQUENCE [GENOMIC DNA]</scope>
</reference>
<reference key="2">
    <citation type="journal article" date="2002" name="Nature">
        <title>The genome sequence of Schizosaccharomyces pombe.</title>
        <authorList>
            <person name="Wood V."/>
            <person name="Gwilliam R."/>
            <person name="Rajandream M.A."/>
            <person name="Lyne M.H."/>
            <person name="Lyne R."/>
            <person name="Stewart A."/>
            <person name="Sgouros J.G."/>
            <person name="Peat N."/>
            <person name="Hayles J."/>
            <person name="Baker S.G."/>
            <person name="Basham D."/>
            <person name="Bowman S."/>
            <person name="Brooks K."/>
            <person name="Brown D."/>
            <person name="Brown S."/>
            <person name="Chillingworth T."/>
            <person name="Churcher C.M."/>
            <person name="Collins M."/>
            <person name="Connor R."/>
            <person name="Cronin A."/>
            <person name="Davis P."/>
            <person name="Feltwell T."/>
            <person name="Fraser A."/>
            <person name="Gentles S."/>
            <person name="Goble A."/>
            <person name="Hamlin N."/>
            <person name="Harris D.E."/>
            <person name="Hidalgo J."/>
            <person name="Hodgson G."/>
            <person name="Holroyd S."/>
            <person name="Hornsby T."/>
            <person name="Howarth S."/>
            <person name="Huckle E.J."/>
            <person name="Hunt S."/>
            <person name="Jagels K."/>
            <person name="James K.D."/>
            <person name="Jones L."/>
            <person name="Jones M."/>
            <person name="Leather S."/>
            <person name="McDonald S."/>
            <person name="McLean J."/>
            <person name="Mooney P."/>
            <person name="Moule S."/>
            <person name="Mungall K.L."/>
            <person name="Murphy L.D."/>
            <person name="Niblett D."/>
            <person name="Odell C."/>
            <person name="Oliver K."/>
            <person name="O'Neil S."/>
            <person name="Pearson D."/>
            <person name="Quail M.A."/>
            <person name="Rabbinowitsch E."/>
            <person name="Rutherford K.M."/>
            <person name="Rutter S."/>
            <person name="Saunders D."/>
            <person name="Seeger K."/>
            <person name="Sharp S."/>
            <person name="Skelton J."/>
            <person name="Simmonds M.N."/>
            <person name="Squares R."/>
            <person name="Squares S."/>
            <person name="Stevens K."/>
            <person name="Taylor K."/>
            <person name="Taylor R.G."/>
            <person name="Tivey A."/>
            <person name="Walsh S.V."/>
            <person name="Warren T."/>
            <person name="Whitehead S."/>
            <person name="Woodward J.R."/>
            <person name="Volckaert G."/>
            <person name="Aert R."/>
            <person name="Robben J."/>
            <person name="Grymonprez B."/>
            <person name="Weltjens I."/>
            <person name="Vanstreels E."/>
            <person name="Rieger M."/>
            <person name="Schaefer M."/>
            <person name="Mueller-Auer S."/>
            <person name="Gabel C."/>
            <person name="Fuchs M."/>
            <person name="Duesterhoeft A."/>
            <person name="Fritzc C."/>
            <person name="Holzer E."/>
            <person name="Moestl D."/>
            <person name="Hilbert H."/>
            <person name="Borzym K."/>
            <person name="Langer I."/>
            <person name="Beck A."/>
            <person name="Lehrach H."/>
            <person name="Reinhardt R."/>
            <person name="Pohl T.M."/>
            <person name="Eger P."/>
            <person name="Zimmermann W."/>
            <person name="Wedler H."/>
            <person name="Wambutt R."/>
            <person name="Purnelle B."/>
            <person name="Goffeau A."/>
            <person name="Cadieu E."/>
            <person name="Dreano S."/>
            <person name="Gloux S."/>
            <person name="Lelaure V."/>
            <person name="Mottier S."/>
            <person name="Galibert F."/>
            <person name="Aves S.J."/>
            <person name="Xiang Z."/>
            <person name="Hunt C."/>
            <person name="Moore K."/>
            <person name="Hurst S.M."/>
            <person name="Lucas M."/>
            <person name="Rochet M."/>
            <person name="Gaillardin C."/>
            <person name="Tallada V.A."/>
            <person name="Garzon A."/>
            <person name="Thode G."/>
            <person name="Daga R.R."/>
            <person name="Cruzado L."/>
            <person name="Jimenez J."/>
            <person name="Sanchez M."/>
            <person name="del Rey F."/>
            <person name="Benito J."/>
            <person name="Dominguez A."/>
            <person name="Revuelta J.L."/>
            <person name="Moreno S."/>
            <person name="Armstrong J."/>
            <person name="Forsburg S.L."/>
            <person name="Cerutti L."/>
            <person name="Lowe T."/>
            <person name="McCombie W.R."/>
            <person name="Paulsen I."/>
            <person name="Potashkin J."/>
            <person name="Shpakovski G.V."/>
            <person name="Ussery D."/>
            <person name="Barrell B.G."/>
            <person name="Nurse P."/>
        </authorList>
    </citation>
    <scope>NUCLEOTIDE SEQUENCE [LARGE SCALE GENOMIC DNA]</scope>
    <source>
        <strain>972 / ATCC 24843</strain>
    </source>
</reference>
<reference key="3">
    <citation type="journal article" date="2000" name="Genes Cells">
        <title>Large-scale screening of intracellular protein localization in living fission yeast cells by the use of a GFP-fusion genomic DNA library.</title>
        <authorList>
            <person name="Ding D.-Q."/>
            <person name="Tomita Y."/>
            <person name="Yamamoto A."/>
            <person name="Chikashige Y."/>
            <person name="Haraguchi T."/>
            <person name="Hiraoka Y."/>
        </authorList>
    </citation>
    <scope>NUCLEOTIDE SEQUENCE [LARGE SCALE GENOMIC DNA] OF 273-486</scope>
    <scope>SUBCELLULAR LOCATION</scope>
    <source>
        <strain>ATCC 38364 / 968</strain>
    </source>
</reference>
<reference key="4">
    <citation type="journal article" date="1999" name="Genes Dev.">
        <title>Fission yeast condensin complex: essential roles of non-SMC subunits for condensation and Cdc2 phosphorylation of Cut3/SMC4.</title>
        <authorList>
            <person name="Sutani T."/>
            <person name="Yuasa T."/>
            <person name="Tomonaga T."/>
            <person name="Dohmae N."/>
            <person name="Takio K."/>
            <person name="Yanagida M."/>
        </authorList>
    </citation>
    <scope>IDENTIFICATION IN A CONDENSIN COMPLEX WITH CUT14; CND1; CND2 AND CND3</scope>
    <scope>PHOSPHORYLATION AT THR-19</scope>
    <scope>MUTAGENESIS OF THR-19</scope>
</reference>
<reference key="5">
    <citation type="journal article" date="2004" name="Proc. Natl. Acad. Sci. U.S.A.">
        <title>Cti1/C1D interacts with condensin SMC hinge and supports the DNA repair function of condensin.</title>
        <authorList>
            <person name="Chen E.S."/>
            <person name="Sutani T."/>
            <person name="Yanagida M."/>
        </authorList>
    </citation>
    <scope>INTERACTION WITH C1739.07</scope>
</reference>
<reference key="6">
    <citation type="journal article" date="2006" name="Nat. Biotechnol.">
        <title>ORFeome cloning and global analysis of protein localization in the fission yeast Schizosaccharomyces pombe.</title>
        <authorList>
            <person name="Matsuyama A."/>
            <person name="Arai R."/>
            <person name="Yashiroda Y."/>
            <person name="Shirai A."/>
            <person name="Kamata A."/>
            <person name="Sekido S."/>
            <person name="Kobayashi Y."/>
            <person name="Hashimoto A."/>
            <person name="Hamamoto M."/>
            <person name="Hiraoka Y."/>
            <person name="Horinouchi S."/>
            <person name="Yoshida M."/>
        </authorList>
    </citation>
    <scope>SUBCELLULAR LOCATION [LARGE SCALE ANALYSIS]</scope>
</reference>
<accession>P41004</accession>
<accession>Q9UTW4</accession>
<accession>Q9UUF8</accession>
<keyword id="KW-0067">ATP-binding</keyword>
<keyword id="KW-0131">Cell cycle</keyword>
<keyword id="KW-0132">Cell division</keyword>
<keyword id="KW-0158">Chromosome</keyword>
<keyword id="KW-0175">Coiled coil</keyword>
<keyword id="KW-0963">Cytoplasm</keyword>
<keyword id="KW-0226">DNA condensation</keyword>
<keyword id="KW-0498">Mitosis</keyword>
<keyword id="KW-0547">Nucleotide-binding</keyword>
<keyword id="KW-0539">Nucleus</keyword>
<keyword id="KW-0597">Phosphoprotein</keyword>
<keyword id="KW-1185">Reference proteome</keyword>
<evidence type="ECO:0000250" key="1"/>
<evidence type="ECO:0000255" key="2"/>
<evidence type="ECO:0000256" key="3">
    <source>
        <dbReference type="SAM" id="MobiDB-lite"/>
    </source>
</evidence>
<evidence type="ECO:0000269" key="4">
    <source>
    </source>
</evidence>
<evidence type="ECO:0000269" key="5">
    <source>
    </source>
</evidence>
<evidence type="ECO:0000305" key="6"/>
<feature type="chain" id="PRO_0000119017" description="Structural maintenance of chromosomes protein 4">
    <location>
        <begin position="1"/>
        <end position="1324"/>
    </location>
</feature>
<feature type="domain" description="SMC hinge">
    <location>
        <begin position="651"/>
        <end position="764"/>
    </location>
</feature>
<feature type="region of interest" description="Disordered" evidence="3">
    <location>
        <begin position="1"/>
        <end position="24"/>
    </location>
</feature>
<feature type="coiled-coil region" evidence="2">
    <location>
        <begin position="310"/>
        <end position="337"/>
    </location>
</feature>
<feature type="coiled-coil region" evidence="2">
    <location>
        <begin position="370"/>
        <end position="628"/>
    </location>
</feature>
<feature type="coiled-coil region" evidence="2">
    <location>
        <begin position="825"/>
        <end position="1077"/>
    </location>
</feature>
<feature type="coiled-coil region" evidence="2">
    <location>
        <begin position="1297"/>
        <end position="1324"/>
    </location>
</feature>
<feature type="binding site" evidence="2">
    <location>
        <begin position="155"/>
        <end position="162"/>
    </location>
    <ligand>
        <name>ATP</name>
        <dbReference type="ChEBI" id="CHEBI:30616"/>
    </ligand>
</feature>
<feature type="modified residue" description="Phosphothreonine; by CDC2" evidence="4">
    <location>
        <position position="19"/>
    </location>
</feature>
<feature type="mutagenesis site" description="Defects in chromosome condensation." evidence="4">
    <original>T</original>
    <variation>A</variation>
    <location>
        <position position="19"/>
    </location>
</feature>
<feature type="sequence conflict" description="In Ref. 1; BAA06454." evidence="6" ref="1">
    <original>L</original>
    <variation>V</variation>
    <location>
        <position position="382"/>
    </location>
</feature>
<feature type="sequence conflict" description="In Ref. 1; BAA06454." evidence="6" ref="1">
    <original>F</original>
    <variation>C</variation>
    <location>
        <position position="393"/>
    </location>
</feature>
<feature type="sequence conflict" description="In Ref. 1; BAA06454." evidence="6" ref="1">
    <original>I</original>
    <variation>L</variation>
    <location>
        <position position="1316"/>
    </location>
</feature>
<protein>
    <recommendedName>
        <fullName>Structural maintenance of chromosomes protein 4</fullName>
    </recommendedName>
    <alternativeName>
        <fullName>Cell untimely torn protein 3</fullName>
    </alternativeName>
    <alternativeName>
        <fullName>Chromosome segregation protein cut3</fullName>
    </alternativeName>
</protein>
<sequence>MSDKGIFRTSSTPSIVDVTPDRGERPRKLVRSVLESPSQKDVASIVKIEQTPSRPFFNDFLKKRITDSLNERPNLLNKFMSAQDGTPSKSTGFNERSSQLVSEFTTTEDIENCEETTQVLPPRLVVYELRLTNFKSYAGTQIVGPFHPSFSSIVGPNGSGKSNVIDALLFVFGFRASKLRQSKASALIHKSATHPSLDSCDVEITFKEVNSDFTYVDGSELTVRRTAYKNNTSKYFVNGVESSFSAVSNLLKEKGIDLNHKRFLILQGEVESIAQMKPRAISEGDDGLLEYLEDIIGTSKYKPIIEENMQELSNSDDICAEKESRLKLVLSEKAKLEDSKNSVLSFLKDENELFMKQNQLYRTILYETRNKKTLVQNLLNSLEGKLQAHLEKFEQTERDISEKNEEVKSLREKAAKVKNDCTSEKKTRQSYEQQTVKIEEQLKFLLNKEKKLKKSIEALSFEKSEAENSLSSHDIDSQKLNSEIADLSLRLQQEELSLDDIRKSLQGKTEGISNAIEEKQKAMAPALEKINQLTSEKQILQVELDMLLNKENDLINDVESSQSSLDKLRNDAEENRNILSSKLKVLSDLKGEKKDVSKNIERKKETVHNTYRNLMSNRTKLEEMKASLSSSRSRGNVLESLQRLHESDNLNGFFGRLGDLATIDEAYDVAISTACPALNHIVVDNIETGQKCVAFLRSNNLGRASFIILKELAQKNLARIQTPENVPRLFDLLRFNDQKFAPAFYNVLQNTLVAKNLEQANRIAYGKTRWRVVTLSGQLIDKSGTMTGGGTRVKKGGMSSAITSDVSPASVETCDKQVQLEDTRYRQHLSELESLNQRFTEISERIPSAELEISKLQLDVSACDRLVAGEERRILQLKSDLKSIRNNNERKRNLQNKISNMDKEVEAININNEGLVTEIKTLQDKIMEIGGIRYRIQKSKVDDLHEQLKFVKDKLNKMSFKKKKNEQRSQSFQVELSNLTSEYDTTTESIATLKTELQSLNKYVDEHKSRLREFENALWDINSSIDELVKFIEFESKQMNSVKAERIELENQIQEQRTALSEVGNNENKYLKLMSNLKLHNLTEFCDQTTMDSTFPEYSEDELSSVDKSELVSNISVLKKKTEDREVDINVLSEYRRCNKEAEKRDSDYQSELQKRTDLKKVVTDLQSQRLDEFMYGFGIISMKLKEMYQIITMGGNAELELVDSLDPFSEGVLFSVMPPKKSWKNISNLSGGEKTLSSLALVFALHNYKPTPLYVMDEIDAALDFKNVSIVANYIKERTKNAQFIVISLRSNMFELSSRLVGIYKTANMTKSVTINNKEILTD</sequence>
<name>SMC4_SCHPO</name>
<dbReference type="EMBL" id="D30788">
    <property type="protein sequence ID" value="BAA06454.1"/>
    <property type="molecule type" value="Genomic_DNA"/>
</dbReference>
<dbReference type="EMBL" id="CU329671">
    <property type="protein sequence ID" value="CAB46756.1"/>
    <property type="molecule type" value="Genomic_DNA"/>
</dbReference>
<dbReference type="EMBL" id="AB027959">
    <property type="protein sequence ID" value="BAA87263.1"/>
    <property type="molecule type" value="Genomic_DNA"/>
</dbReference>
<dbReference type="PIR" id="S51622">
    <property type="entry name" value="S51622"/>
</dbReference>
<dbReference type="RefSeq" id="NP_595392.1">
    <property type="nucleotide sequence ID" value="NM_001021299.2"/>
</dbReference>
<dbReference type="SMR" id="P41004"/>
<dbReference type="BioGRID" id="276367">
    <property type="interactions" value="69"/>
</dbReference>
<dbReference type="DIP" id="DIP-35048N"/>
<dbReference type="FunCoup" id="P41004">
    <property type="interactions" value="501"/>
</dbReference>
<dbReference type="IntAct" id="P41004">
    <property type="interactions" value="6"/>
</dbReference>
<dbReference type="STRING" id="284812.P41004"/>
<dbReference type="iPTMnet" id="P41004"/>
<dbReference type="PaxDb" id="4896-SPBC146.03c.1"/>
<dbReference type="EnsemblFungi" id="SPBC146.03c.1">
    <property type="protein sequence ID" value="SPBC146.03c.1:pep"/>
    <property type="gene ID" value="SPBC146.03c"/>
</dbReference>
<dbReference type="GeneID" id="2539817"/>
<dbReference type="KEGG" id="spo:2539817"/>
<dbReference type="PomBase" id="SPBC146.03c">
    <property type="gene designation" value="cut3"/>
</dbReference>
<dbReference type="VEuPathDB" id="FungiDB:SPBC146.03c"/>
<dbReference type="eggNOG" id="KOG0996">
    <property type="taxonomic scope" value="Eukaryota"/>
</dbReference>
<dbReference type="HOGENOM" id="CLU_001042_4_1_1"/>
<dbReference type="InParanoid" id="P41004"/>
<dbReference type="OMA" id="CPALDNM"/>
<dbReference type="PhylomeDB" id="P41004"/>
<dbReference type="PRO" id="PR:P41004"/>
<dbReference type="Proteomes" id="UP000002485">
    <property type="component" value="Chromosome II"/>
</dbReference>
<dbReference type="GO" id="GO:0000785">
    <property type="term" value="C:chromatin"/>
    <property type="evidence" value="ECO:0000314"/>
    <property type="project" value="PomBase"/>
</dbReference>
<dbReference type="GO" id="GO:0000796">
    <property type="term" value="C:condensin complex"/>
    <property type="evidence" value="ECO:0000314"/>
    <property type="project" value="PomBase"/>
</dbReference>
<dbReference type="GO" id="GO:0005737">
    <property type="term" value="C:cytoplasm"/>
    <property type="evidence" value="ECO:0000314"/>
    <property type="project" value="PomBase"/>
</dbReference>
<dbReference type="GO" id="GO:0005829">
    <property type="term" value="C:cytosol"/>
    <property type="evidence" value="ECO:0007005"/>
    <property type="project" value="PomBase"/>
</dbReference>
<dbReference type="GO" id="GO:0005634">
    <property type="term" value="C:nucleus"/>
    <property type="evidence" value="ECO:0000314"/>
    <property type="project" value="PomBase"/>
</dbReference>
<dbReference type="GO" id="GO:0005524">
    <property type="term" value="F:ATP binding"/>
    <property type="evidence" value="ECO:0007669"/>
    <property type="project" value="UniProtKB-KW"/>
</dbReference>
<dbReference type="GO" id="GO:0016887">
    <property type="term" value="F:ATP hydrolysis activity"/>
    <property type="evidence" value="ECO:0007669"/>
    <property type="project" value="InterPro"/>
</dbReference>
<dbReference type="GO" id="GO:0015616">
    <property type="term" value="F:DNA translocase activity"/>
    <property type="evidence" value="ECO:0000304"/>
    <property type="project" value="PomBase"/>
</dbReference>
<dbReference type="GO" id="GO:0051301">
    <property type="term" value="P:cell division"/>
    <property type="evidence" value="ECO:0007669"/>
    <property type="project" value="UniProtKB-KW"/>
</dbReference>
<dbReference type="GO" id="GO:0007076">
    <property type="term" value="P:mitotic chromosome condensation"/>
    <property type="evidence" value="ECO:0000314"/>
    <property type="project" value="PomBase"/>
</dbReference>
<dbReference type="FunFam" id="3.30.70.1620:FF:000003">
    <property type="entry name" value="Structural maintenance of chromosomes 4"/>
    <property type="match status" value="1"/>
</dbReference>
<dbReference type="FunFam" id="3.40.50.300:FF:000481">
    <property type="entry name" value="Structural maintenance of chromosomes 4"/>
    <property type="match status" value="1"/>
</dbReference>
<dbReference type="Gene3D" id="1.20.1060.20">
    <property type="match status" value="1"/>
</dbReference>
<dbReference type="Gene3D" id="1.20.5.170">
    <property type="match status" value="1"/>
</dbReference>
<dbReference type="Gene3D" id="3.30.70.1620">
    <property type="match status" value="1"/>
</dbReference>
<dbReference type="Gene3D" id="3.40.50.300">
    <property type="entry name" value="P-loop containing nucleotide triphosphate hydrolases"/>
    <property type="match status" value="2"/>
</dbReference>
<dbReference type="InterPro" id="IPR027417">
    <property type="entry name" value="P-loop_NTPase"/>
</dbReference>
<dbReference type="InterPro" id="IPR003395">
    <property type="entry name" value="RecF/RecN/SMC_N"/>
</dbReference>
<dbReference type="InterPro" id="IPR024704">
    <property type="entry name" value="SMC"/>
</dbReference>
<dbReference type="InterPro" id="IPR010935">
    <property type="entry name" value="SMC_hinge"/>
</dbReference>
<dbReference type="InterPro" id="IPR036277">
    <property type="entry name" value="SMC_hinge_sf"/>
</dbReference>
<dbReference type="PANTHER" id="PTHR18937:SF172">
    <property type="entry name" value="STRUCTURAL MAINTENANCE OF CHROMOSOMES PROTEIN"/>
    <property type="match status" value="1"/>
</dbReference>
<dbReference type="PANTHER" id="PTHR18937">
    <property type="entry name" value="STRUCTURAL MAINTENANCE OF CHROMOSOMES SMC FAMILY MEMBER"/>
    <property type="match status" value="1"/>
</dbReference>
<dbReference type="Pfam" id="PF06470">
    <property type="entry name" value="SMC_hinge"/>
    <property type="match status" value="1"/>
</dbReference>
<dbReference type="Pfam" id="PF02463">
    <property type="entry name" value="SMC_N"/>
    <property type="match status" value="1"/>
</dbReference>
<dbReference type="PIRSF" id="PIRSF005719">
    <property type="entry name" value="SMC"/>
    <property type="match status" value="1"/>
</dbReference>
<dbReference type="SMART" id="SM00968">
    <property type="entry name" value="SMC_hinge"/>
    <property type="match status" value="1"/>
</dbReference>
<dbReference type="SUPFAM" id="SSF52540">
    <property type="entry name" value="P-loop containing nucleoside triphosphate hydrolases"/>
    <property type="match status" value="1"/>
</dbReference>
<dbReference type="SUPFAM" id="SSF75553">
    <property type="entry name" value="Smc hinge domain"/>
    <property type="match status" value="1"/>
</dbReference>
<proteinExistence type="evidence at protein level"/>